<gene>
    <name evidence="1" type="primary">rpmI</name>
    <name type="ordered locus">Francci3_3181</name>
</gene>
<keyword id="KW-1185">Reference proteome</keyword>
<keyword id="KW-0687">Ribonucleoprotein</keyword>
<keyword id="KW-0689">Ribosomal protein</keyword>
<comment type="similarity">
    <text evidence="1">Belongs to the bacterial ribosomal protein bL35 family.</text>
</comment>
<accession>Q2J854</accession>
<feature type="chain" id="PRO_0000258682" description="Large ribosomal subunit protein bL35">
    <location>
        <begin position="1"/>
        <end position="64"/>
    </location>
</feature>
<feature type="region of interest" description="Disordered" evidence="2">
    <location>
        <begin position="1"/>
        <end position="22"/>
    </location>
</feature>
<feature type="compositionally biased region" description="Basic residues" evidence="2">
    <location>
        <begin position="1"/>
        <end position="15"/>
    </location>
</feature>
<dbReference type="EMBL" id="CP000249">
    <property type="protein sequence ID" value="ABD12538.1"/>
    <property type="molecule type" value="Genomic_DNA"/>
</dbReference>
<dbReference type="RefSeq" id="WP_011437566.1">
    <property type="nucleotide sequence ID" value="NZ_JENI01000044.1"/>
</dbReference>
<dbReference type="SMR" id="Q2J854"/>
<dbReference type="STRING" id="106370.Francci3_3181"/>
<dbReference type="KEGG" id="fra:Francci3_3181"/>
<dbReference type="eggNOG" id="COG0291">
    <property type="taxonomic scope" value="Bacteria"/>
</dbReference>
<dbReference type="HOGENOM" id="CLU_169643_4_2_11"/>
<dbReference type="OrthoDB" id="9804851at2"/>
<dbReference type="PhylomeDB" id="Q2J854"/>
<dbReference type="Proteomes" id="UP000001937">
    <property type="component" value="Chromosome"/>
</dbReference>
<dbReference type="GO" id="GO:0022625">
    <property type="term" value="C:cytosolic large ribosomal subunit"/>
    <property type="evidence" value="ECO:0007669"/>
    <property type="project" value="TreeGrafter"/>
</dbReference>
<dbReference type="GO" id="GO:0003735">
    <property type="term" value="F:structural constituent of ribosome"/>
    <property type="evidence" value="ECO:0007669"/>
    <property type="project" value="InterPro"/>
</dbReference>
<dbReference type="GO" id="GO:0006412">
    <property type="term" value="P:translation"/>
    <property type="evidence" value="ECO:0007669"/>
    <property type="project" value="UniProtKB-UniRule"/>
</dbReference>
<dbReference type="FunFam" id="4.10.410.60:FF:000001">
    <property type="entry name" value="50S ribosomal protein L35"/>
    <property type="match status" value="1"/>
</dbReference>
<dbReference type="Gene3D" id="4.10.410.60">
    <property type="match status" value="1"/>
</dbReference>
<dbReference type="HAMAP" id="MF_00514">
    <property type="entry name" value="Ribosomal_bL35"/>
    <property type="match status" value="1"/>
</dbReference>
<dbReference type="InterPro" id="IPR001706">
    <property type="entry name" value="Ribosomal_bL35"/>
</dbReference>
<dbReference type="InterPro" id="IPR021137">
    <property type="entry name" value="Ribosomal_bL35-like"/>
</dbReference>
<dbReference type="InterPro" id="IPR018265">
    <property type="entry name" value="Ribosomal_bL35_CS"/>
</dbReference>
<dbReference type="InterPro" id="IPR037229">
    <property type="entry name" value="Ribosomal_bL35_sf"/>
</dbReference>
<dbReference type="NCBIfam" id="TIGR00001">
    <property type="entry name" value="rpmI_bact"/>
    <property type="match status" value="1"/>
</dbReference>
<dbReference type="PANTHER" id="PTHR33343">
    <property type="entry name" value="54S RIBOSOMAL PROTEIN BL35M"/>
    <property type="match status" value="1"/>
</dbReference>
<dbReference type="PANTHER" id="PTHR33343:SF1">
    <property type="entry name" value="LARGE RIBOSOMAL SUBUNIT PROTEIN BL35M"/>
    <property type="match status" value="1"/>
</dbReference>
<dbReference type="Pfam" id="PF01632">
    <property type="entry name" value="Ribosomal_L35p"/>
    <property type="match status" value="1"/>
</dbReference>
<dbReference type="PRINTS" id="PR00064">
    <property type="entry name" value="RIBOSOMALL35"/>
</dbReference>
<dbReference type="SUPFAM" id="SSF143034">
    <property type="entry name" value="L35p-like"/>
    <property type="match status" value="1"/>
</dbReference>
<dbReference type="PROSITE" id="PS00936">
    <property type="entry name" value="RIBOSOMAL_L35"/>
    <property type="match status" value="1"/>
</dbReference>
<protein>
    <recommendedName>
        <fullName evidence="1">Large ribosomal subunit protein bL35</fullName>
    </recommendedName>
    <alternativeName>
        <fullName evidence="3">50S ribosomal protein L35</fullName>
    </alternativeName>
</protein>
<evidence type="ECO:0000255" key="1">
    <source>
        <dbReference type="HAMAP-Rule" id="MF_00514"/>
    </source>
</evidence>
<evidence type="ECO:0000256" key="2">
    <source>
        <dbReference type="SAM" id="MobiDB-lite"/>
    </source>
</evidence>
<evidence type="ECO:0000305" key="3"/>
<reference key="1">
    <citation type="journal article" date="2007" name="Genome Res.">
        <title>Genome characteristics of facultatively symbiotic Frankia sp. strains reflect host range and host plant biogeography.</title>
        <authorList>
            <person name="Normand P."/>
            <person name="Lapierre P."/>
            <person name="Tisa L.S."/>
            <person name="Gogarten J.P."/>
            <person name="Alloisio N."/>
            <person name="Bagnarol E."/>
            <person name="Bassi C.A."/>
            <person name="Berry A.M."/>
            <person name="Bickhart D.M."/>
            <person name="Choisne N."/>
            <person name="Couloux A."/>
            <person name="Cournoyer B."/>
            <person name="Cruveiller S."/>
            <person name="Daubin V."/>
            <person name="Demange N."/>
            <person name="Francino M.P."/>
            <person name="Goltsman E."/>
            <person name="Huang Y."/>
            <person name="Kopp O.R."/>
            <person name="Labarre L."/>
            <person name="Lapidus A."/>
            <person name="Lavire C."/>
            <person name="Marechal J."/>
            <person name="Martinez M."/>
            <person name="Mastronunzio J.E."/>
            <person name="Mullin B.C."/>
            <person name="Niemann J."/>
            <person name="Pujic P."/>
            <person name="Rawnsley T."/>
            <person name="Rouy Z."/>
            <person name="Schenowitz C."/>
            <person name="Sellstedt A."/>
            <person name="Tavares F."/>
            <person name="Tomkins J.P."/>
            <person name="Vallenet D."/>
            <person name="Valverde C."/>
            <person name="Wall L.G."/>
            <person name="Wang Y."/>
            <person name="Medigue C."/>
            <person name="Benson D.R."/>
        </authorList>
    </citation>
    <scope>NUCLEOTIDE SEQUENCE [LARGE SCALE GENOMIC DNA]</scope>
    <source>
        <strain>DSM 45818 / CECT 9043 / HFP020203 / CcI3</strain>
    </source>
</reference>
<proteinExistence type="inferred from homology"/>
<name>RL35_FRACC</name>
<organism>
    <name type="scientific">Frankia casuarinae (strain DSM 45818 / CECT 9043 / HFP020203 / CcI3)</name>
    <dbReference type="NCBI Taxonomy" id="106370"/>
    <lineage>
        <taxon>Bacteria</taxon>
        <taxon>Bacillati</taxon>
        <taxon>Actinomycetota</taxon>
        <taxon>Actinomycetes</taxon>
        <taxon>Frankiales</taxon>
        <taxon>Frankiaceae</taxon>
        <taxon>Frankia</taxon>
    </lineage>
</organism>
<sequence>MPKQKSHSGASKRFRVTGSGKVLRQRANRRHYLEHKTSRLTRRLDGVVPLTKADNRRVKRLLAR</sequence>